<protein>
    <recommendedName>
        <fullName evidence="1">Glutamine--fructose-6-phosphate aminotransferase [isomerizing]</fullName>
        <ecNumber evidence="1">2.6.1.16</ecNumber>
    </recommendedName>
    <alternativeName>
        <fullName evidence="1">D-fructose-6-phosphate amidotransferase</fullName>
    </alternativeName>
    <alternativeName>
        <fullName evidence="1">GFAT</fullName>
    </alternativeName>
    <alternativeName>
        <fullName evidence="1">Glucosamine-6-phosphate synthase</fullName>
    </alternativeName>
    <alternativeName>
        <fullName evidence="1">Hexosephosphate aminotransferase</fullName>
    </alternativeName>
    <alternativeName>
        <fullName evidence="1">L-glutamine--D-fructose-6-phosphate amidotransferase</fullName>
    </alternativeName>
</protein>
<dbReference type="EC" id="2.6.1.16" evidence="1"/>
<dbReference type="EMBL" id="AL596166">
    <property type="protein sequence ID" value="CAC95966.1"/>
    <property type="molecule type" value="Genomic_DNA"/>
</dbReference>
<dbReference type="PIR" id="AF1524">
    <property type="entry name" value="AF1524"/>
</dbReference>
<dbReference type="RefSeq" id="WP_010990576.1">
    <property type="nucleotide sequence ID" value="NC_003212.1"/>
</dbReference>
<dbReference type="SMR" id="Q92DS8"/>
<dbReference type="STRING" id="272626.gene:17565061"/>
<dbReference type="KEGG" id="lin:lin0734"/>
<dbReference type="eggNOG" id="COG0449">
    <property type="taxonomic scope" value="Bacteria"/>
</dbReference>
<dbReference type="HOGENOM" id="CLU_012520_7_1_9"/>
<dbReference type="OrthoDB" id="106547at2"/>
<dbReference type="Proteomes" id="UP000002513">
    <property type="component" value="Chromosome"/>
</dbReference>
<dbReference type="GO" id="GO:0005829">
    <property type="term" value="C:cytosol"/>
    <property type="evidence" value="ECO:0007669"/>
    <property type="project" value="TreeGrafter"/>
</dbReference>
<dbReference type="GO" id="GO:0097367">
    <property type="term" value="F:carbohydrate derivative binding"/>
    <property type="evidence" value="ECO:0007669"/>
    <property type="project" value="InterPro"/>
</dbReference>
<dbReference type="GO" id="GO:0004360">
    <property type="term" value="F:glutamine-fructose-6-phosphate transaminase (isomerizing) activity"/>
    <property type="evidence" value="ECO:0007669"/>
    <property type="project" value="UniProtKB-UniRule"/>
</dbReference>
<dbReference type="GO" id="GO:0005975">
    <property type="term" value="P:carbohydrate metabolic process"/>
    <property type="evidence" value="ECO:0007669"/>
    <property type="project" value="UniProtKB-UniRule"/>
</dbReference>
<dbReference type="GO" id="GO:0006002">
    <property type="term" value="P:fructose 6-phosphate metabolic process"/>
    <property type="evidence" value="ECO:0007669"/>
    <property type="project" value="TreeGrafter"/>
</dbReference>
<dbReference type="GO" id="GO:0006487">
    <property type="term" value="P:protein N-linked glycosylation"/>
    <property type="evidence" value="ECO:0007669"/>
    <property type="project" value="TreeGrafter"/>
</dbReference>
<dbReference type="GO" id="GO:0006047">
    <property type="term" value="P:UDP-N-acetylglucosamine metabolic process"/>
    <property type="evidence" value="ECO:0007669"/>
    <property type="project" value="TreeGrafter"/>
</dbReference>
<dbReference type="CDD" id="cd00714">
    <property type="entry name" value="GFAT"/>
    <property type="match status" value="1"/>
</dbReference>
<dbReference type="CDD" id="cd05008">
    <property type="entry name" value="SIS_GlmS_GlmD_1"/>
    <property type="match status" value="1"/>
</dbReference>
<dbReference type="CDD" id="cd05009">
    <property type="entry name" value="SIS_GlmS_GlmD_2"/>
    <property type="match status" value="1"/>
</dbReference>
<dbReference type="FunFam" id="3.40.50.10490:FF:000001">
    <property type="entry name" value="Glutamine--fructose-6-phosphate aminotransferase [isomerizing]"/>
    <property type="match status" value="1"/>
</dbReference>
<dbReference type="FunFam" id="3.60.20.10:FF:000006">
    <property type="entry name" value="Glutamine--fructose-6-phosphate aminotransferase [isomerizing]"/>
    <property type="match status" value="1"/>
</dbReference>
<dbReference type="Gene3D" id="3.40.50.10490">
    <property type="entry name" value="Glucose-6-phosphate isomerase like protein, domain 1"/>
    <property type="match status" value="2"/>
</dbReference>
<dbReference type="Gene3D" id="3.60.20.10">
    <property type="entry name" value="Glutamine Phosphoribosylpyrophosphate, subunit 1, domain 1"/>
    <property type="match status" value="1"/>
</dbReference>
<dbReference type="HAMAP" id="MF_00164">
    <property type="entry name" value="GlmS"/>
    <property type="match status" value="1"/>
</dbReference>
<dbReference type="InterPro" id="IPR017932">
    <property type="entry name" value="GATase_2_dom"/>
</dbReference>
<dbReference type="InterPro" id="IPR005855">
    <property type="entry name" value="GFAT"/>
</dbReference>
<dbReference type="InterPro" id="IPR047084">
    <property type="entry name" value="GFAT_N"/>
</dbReference>
<dbReference type="InterPro" id="IPR035466">
    <property type="entry name" value="GlmS/AgaS_SIS"/>
</dbReference>
<dbReference type="InterPro" id="IPR035490">
    <property type="entry name" value="GlmS/FrlB_SIS"/>
</dbReference>
<dbReference type="InterPro" id="IPR029055">
    <property type="entry name" value="Ntn_hydrolases_N"/>
</dbReference>
<dbReference type="InterPro" id="IPR001347">
    <property type="entry name" value="SIS_dom"/>
</dbReference>
<dbReference type="InterPro" id="IPR046348">
    <property type="entry name" value="SIS_dom_sf"/>
</dbReference>
<dbReference type="NCBIfam" id="TIGR01135">
    <property type="entry name" value="glmS"/>
    <property type="match status" value="1"/>
</dbReference>
<dbReference type="NCBIfam" id="NF001484">
    <property type="entry name" value="PRK00331.1"/>
    <property type="match status" value="1"/>
</dbReference>
<dbReference type="PANTHER" id="PTHR10937">
    <property type="entry name" value="GLUCOSAMINE--FRUCTOSE-6-PHOSPHATE AMINOTRANSFERASE, ISOMERIZING"/>
    <property type="match status" value="1"/>
</dbReference>
<dbReference type="PANTHER" id="PTHR10937:SF0">
    <property type="entry name" value="GLUTAMINE--FRUCTOSE-6-PHOSPHATE TRANSAMINASE (ISOMERIZING)"/>
    <property type="match status" value="1"/>
</dbReference>
<dbReference type="Pfam" id="PF13522">
    <property type="entry name" value="GATase_6"/>
    <property type="match status" value="1"/>
</dbReference>
<dbReference type="Pfam" id="PF01380">
    <property type="entry name" value="SIS"/>
    <property type="match status" value="2"/>
</dbReference>
<dbReference type="SUPFAM" id="SSF56235">
    <property type="entry name" value="N-terminal nucleophile aminohydrolases (Ntn hydrolases)"/>
    <property type="match status" value="1"/>
</dbReference>
<dbReference type="SUPFAM" id="SSF53697">
    <property type="entry name" value="SIS domain"/>
    <property type="match status" value="1"/>
</dbReference>
<dbReference type="PROSITE" id="PS51278">
    <property type="entry name" value="GATASE_TYPE_2"/>
    <property type="match status" value="1"/>
</dbReference>
<dbReference type="PROSITE" id="PS51464">
    <property type="entry name" value="SIS"/>
    <property type="match status" value="2"/>
</dbReference>
<comment type="function">
    <text evidence="1">Catalyzes the first step in hexosamine metabolism, converting fructose-6P into glucosamine-6P using glutamine as a nitrogen source.</text>
</comment>
<comment type="catalytic activity">
    <reaction evidence="1">
        <text>D-fructose 6-phosphate + L-glutamine = D-glucosamine 6-phosphate + L-glutamate</text>
        <dbReference type="Rhea" id="RHEA:13237"/>
        <dbReference type="ChEBI" id="CHEBI:29985"/>
        <dbReference type="ChEBI" id="CHEBI:58359"/>
        <dbReference type="ChEBI" id="CHEBI:58725"/>
        <dbReference type="ChEBI" id="CHEBI:61527"/>
        <dbReference type="EC" id="2.6.1.16"/>
    </reaction>
</comment>
<comment type="subunit">
    <text evidence="1">Homodimer.</text>
</comment>
<comment type="subcellular location">
    <subcellularLocation>
        <location evidence="1">Cytoplasm</location>
    </subcellularLocation>
</comment>
<accession>Q92DS8</accession>
<evidence type="ECO:0000255" key="1">
    <source>
        <dbReference type="HAMAP-Rule" id="MF_00164"/>
    </source>
</evidence>
<reference key="1">
    <citation type="journal article" date="2001" name="Science">
        <title>Comparative genomics of Listeria species.</title>
        <authorList>
            <person name="Glaser P."/>
            <person name="Frangeul L."/>
            <person name="Buchrieser C."/>
            <person name="Rusniok C."/>
            <person name="Amend A."/>
            <person name="Baquero F."/>
            <person name="Berche P."/>
            <person name="Bloecker H."/>
            <person name="Brandt P."/>
            <person name="Chakraborty T."/>
            <person name="Charbit A."/>
            <person name="Chetouani F."/>
            <person name="Couve E."/>
            <person name="de Daruvar A."/>
            <person name="Dehoux P."/>
            <person name="Domann E."/>
            <person name="Dominguez-Bernal G."/>
            <person name="Duchaud E."/>
            <person name="Durant L."/>
            <person name="Dussurget O."/>
            <person name="Entian K.-D."/>
            <person name="Fsihi H."/>
            <person name="Garcia-del Portillo F."/>
            <person name="Garrido P."/>
            <person name="Gautier L."/>
            <person name="Goebel W."/>
            <person name="Gomez-Lopez N."/>
            <person name="Hain T."/>
            <person name="Hauf J."/>
            <person name="Jackson D."/>
            <person name="Jones L.-M."/>
            <person name="Kaerst U."/>
            <person name="Kreft J."/>
            <person name="Kuhn M."/>
            <person name="Kunst F."/>
            <person name="Kurapkat G."/>
            <person name="Madueno E."/>
            <person name="Maitournam A."/>
            <person name="Mata Vicente J."/>
            <person name="Ng E."/>
            <person name="Nedjari H."/>
            <person name="Nordsiek G."/>
            <person name="Novella S."/>
            <person name="de Pablos B."/>
            <person name="Perez-Diaz J.-C."/>
            <person name="Purcell R."/>
            <person name="Remmel B."/>
            <person name="Rose M."/>
            <person name="Schlueter T."/>
            <person name="Simoes N."/>
            <person name="Tierrez A."/>
            <person name="Vazquez-Boland J.-A."/>
            <person name="Voss H."/>
            <person name="Wehland J."/>
            <person name="Cossart P."/>
        </authorList>
    </citation>
    <scope>NUCLEOTIDE SEQUENCE [LARGE SCALE GENOMIC DNA]</scope>
    <source>
        <strain>ATCC BAA-680 / CLIP 11262</strain>
    </source>
</reference>
<name>GLMS_LISIN</name>
<keyword id="KW-0032">Aminotransferase</keyword>
<keyword id="KW-0963">Cytoplasm</keyword>
<keyword id="KW-0315">Glutamine amidotransferase</keyword>
<keyword id="KW-0677">Repeat</keyword>
<keyword id="KW-0808">Transferase</keyword>
<proteinExistence type="inferred from homology"/>
<sequence length="601" mass="65656">MCGIVGYIGTNNAKGILLEGLEKLEYRGYDSAGIALQNKDLVTVVKEKGRIADLASLVPSDAFGTTGIGHTRWATHGKPNHENAHPHQSKSGRFTIVHNGVIENYTLLKEEYLKNHSFISDTDTEVIVQLIELFAEKLSTKEAFKKALSLLHGSYAICLIDQTDTETLYAAKNKSPLLIGKGENFNVIASDAMAVLKETDEFVEIMDKEIVIVTKDGFTLETLEGEEVSRASYTAELDASDIEKGTYPHYMLKEIDEQPAVTRKIIQAYQNEAGEINVDQTILDEILSSDRIHIVACGTSYHAGLVGKNLIEKMAKIPVEVHVSSEFGYNLPLMSKKPLFIFITQSGETADSRQCLVKVKELGYRTLTLTNVPGSTLDREADHSMYLYAGPEIAVASTKAYTAQISVLAVLAVSLGREIGDAEALSINLAAELGIVATAMEAMVSSKEVIEHIAGEYLATSRNAFFLGRNIDYFVAMEAALKLKEISYIQAEGFASGELKHGTIALIEDGTPVLALITQESINWNIRGNVNEVLARGAKTCVFAMENVAQPGDRFVIPQVHPLLTPLASVIPCQLLAYYAALHRDCDVDKPRNLAKSVTVE</sequence>
<organism>
    <name type="scientific">Listeria innocua serovar 6a (strain ATCC BAA-680 / CLIP 11262)</name>
    <dbReference type="NCBI Taxonomy" id="272626"/>
    <lineage>
        <taxon>Bacteria</taxon>
        <taxon>Bacillati</taxon>
        <taxon>Bacillota</taxon>
        <taxon>Bacilli</taxon>
        <taxon>Bacillales</taxon>
        <taxon>Listeriaceae</taxon>
        <taxon>Listeria</taxon>
    </lineage>
</organism>
<feature type="initiator methionine" description="Removed" evidence="1">
    <location>
        <position position="1"/>
    </location>
</feature>
<feature type="chain" id="PRO_0000135351" description="Glutamine--fructose-6-phosphate aminotransferase [isomerizing]">
    <location>
        <begin position="2"/>
        <end position="601"/>
    </location>
</feature>
<feature type="domain" description="Glutamine amidotransferase type-2" evidence="1">
    <location>
        <begin position="2"/>
        <end position="216"/>
    </location>
</feature>
<feature type="domain" description="SIS 1" evidence="1">
    <location>
        <begin position="282"/>
        <end position="421"/>
    </location>
</feature>
<feature type="domain" description="SIS 2" evidence="1">
    <location>
        <begin position="453"/>
        <end position="591"/>
    </location>
</feature>
<feature type="active site" description="Nucleophile; for GATase activity" evidence="1">
    <location>
        <position position="2"/>
    </location>
</feature>
<feature type="active site" description="For Fru-6P isomerization activity" evidence="1">
    <location>
        <position position="596"/>
    </location>
</feature>
<gene>
    <name evidence="1" type="primary">glmS</name>
    <name type="ordered locus">lin0734</name>
</gene>